<keyword id="KW-0067">ATP-binding</keyword>
<keyword id="KW-0963">Cytoplasm</keyword>
<keyword id="KW-1015">Disulfide bond</keyword>
<keyword id="KW-0547">Nucleotide-binding</keyword>
<keyword id="KW-0694">RNA-binding</keyword>
<keyword id="KW-0808">Transferase</keyword>
<keyword id="KW-0819">tRNA processing</keyword>
<keyword id="KW-0820">tRNA-binding</keyword>
<organism>
    <name type="scientific">Burkholderia cenocepacia (strain ATCC BAA-245 / DSM 16553 / LMG 16656 / NCTC 13227 / J2315 / CF5610)</name>
    <name type="common">Burkholderia cepacia (strain J2315)</name>
    <dbReference type="NCBI Taxonomy" id="216591"/>
    <lineage>
        <taxon>Bacteria</taxon>
        <taxon>Pseudomonadati</taxon>
        <taxon>Pseudomonadota</taxon>
        <taxon>Betaproteobacteria</taxon>
        <taxon>Burkholderiales</taxon>
        <taxon>Burkholderiaceae</taxon>
        <taxon>Burkholderia</taxon>
        <taxon>Burkholderia cepacia complex</taxon>
    </lineage>
</organism>
<sequence>MSKRRVVVGMSGGVDSSVTAWLLKEQGYDVVGLFMKNWEDDDDGEYCSTRQDWIDVVSVADLIGIDVEAVNFAAEYKDRVFAEFLREYSAGRTPNPDVLCNAEIKFKAFLDHAMSLDAEMIATGHYARVRERDGRFELLKAFDHTKDQSYFLHRLNQAQLSKTMFPLGEIPKTKVREIAAQIGLPNAKKKDSTGICFIGERPFRDFLNRYLPTKPGPMKTPDGKVVGEHIGLAFYTFGQRKGIGLGGSKSGSGEPWFVAAKDIASNTLYVVQGHDHPWLLSRELVAGNVSWVAGEPPADGFACGAKTRYRQADAACVFGLAATGAEAAGPAGEARFSLAFDDAQWAVTPGQSAVLYDGEICLGGGIIESAATGQPGQATSTGHAPALAEAR</sequence>
<proteinExistence type="inferred from homology"/>
<feature type="chain" id="PRO_1000096287" description="tRNA-specific 2-thiouridylase MnmA">
    <location>
        <begin position="1"/>
        <end position="391"/>
    </location>
</feature>
<feature type="region of interest" description="Interaction with target base in tRNA" evidence="1">
    <location>
        <begin position="95"/>
        <end position="97"/>
    </location>
</feature>
<feature type="region of interest" description="Interaction with tRNA" evidence="1">
    <location>
        <begin position="146"/>
        <end position="148"/>
    </location>
</feature>
<feature type="region of interest" description="Interaction with tRNA" evidence="1">
    <location>
        <begin position="308"/>
        <end position="309"/>
    </location>
</feature>
<feature type="region of interest" description="Disordered" evidence="2">
    <location>
        <begin position="372"/>
        <end position="391"/>
    </location>
</feature>
<feature type="compositionally biased region" description="Polar residues" evidence="2">
    <location>
        <begin position="372"/>
        <end position="382"/>
    </location>
</feature>
<feature type="active site" description="Nucleophile" evidence="1">
    <location>
        <position position="100"/>
    </location>
</feature>
<feature type="active site" description="Cysteine persulfide intermediate" evidence="1">
    <location>
        <position position="196"/>
    </location>
</feature>
<feature type="binding site" evidence="1">
    <location>
        <begin position="9"/>
        <end position="16"/>
    </location>
    <ligand>
        <name>ATP</name>
        <dbReference type="ChEBI" id="CHEBI:30616"/>
    </ligand>
</feature>
<feature type="binding site" evidence="1">
    <location>
        <position position="35"/>
    </location>
    <ligand>
        <name>ATP</name>
        <dbReference type="ChEBI" id="CHEBI:30616"/>
    </ligand>
</feature>
<feature type="binding site" evidence="1">
    <location>
        <position position="124"/>
    </location>
    <ligand>
        <name>ATP</name>
        <dbReference type="ChEBI" id="CHEBI:30616"/>
    </ligand>
</feature>
<feature type="site" description="Interaction with tRNA" evidence="1">
    <location>
        <position position="125"/>
    </location>
</feature>
<feature type="site" description="Interaction with tRNA" evidence="1">
    <location>
        <position position="351"/>
    </location>
</feature>
<feature type="disulfide bond" description="Alternate" evidence="1">
    <location>
        <begin position="100"/>
        <end position="196"/>
    </location>
</feature>
<dbReference type="EC" id="2.8.1.13" evidence="1"/>
<dbReference type="EMBL" id="AM747720">
    <property type="protein sequence ID" value="CAR53652.1"/>
    <property type="molecule type" value="Genomic_DNA"/>
</dbReference>
<dbReference type="RefSeq" id="WP_012492953.1">
    <property type="nucleotide sequence ID" value="NC_011000.1"/>
</dbReference>
<dbReference type="SMR" id="B4EE50"/>
<dbReference type="KEGG" id="bcj:BCAL3329"/>
<dbReference type="eggNOG" id="COG0482">
    <property type="taxonomic scope" value="Bacteria"/>
</dbReference>
<dbReference type="HOGENOM" id="CLU_035188_1_0_4"/>
<dbReference type="BioCyc" id="BCEN216591:G1G1V-3704-MONOMER"/>
<dbReference type="Proteomes" id="UP000001035">
    <property type="component" value="Chromosome 1"/>
</dbReference>
<dbReference type="GO" id="GO:0005737">
    <property type="term" value="C:cytoplasm"/>
    <property type="evidence" value="ECO:0007669"/>
    <property type="project" value="UniProtKB-SubCell"/>
</dbReference>
<dbReference type="GO" id="GO:0005524">
    <property type="term" value="F:ATP binding"/>
    <property type="evidence" value="ECO:0007669"/>
    <property type="project" value="UniProtKB-KW"/>
</dbReference>
<dbReference type="GO" id="GO:0000049">
    <property type="term" value="F:tRNA binding"/>
    <property type="evidence" value="ECO:0007669"/>
    <property type="project" value="UniProtKB-KW"/>
</dbReference>
<dbReference type="GO" id="GO:0103016">
    <property type="term" value="F:tRNA-uridine 2-sulfurtransferase activity"/>
    <property type="evidence" value="ECO:0007669"/>
    <property type="project" value="UniProtKB-EC"/>
</dbReference>
<dbReference type="GO" id="GO:0002143">
    <property type="term" value="P:tRNA wobble position uridine thiolation"/>
    <property type="evidence" value="ECO:0007669"/>
    <property type="project" value="TreeGrafter"/>
</dbReference>
<dbReference type="CDD" id="cd01998">
    <property type="entry name" value="MnmA_TRMU-like"/>
    <property type="match status" value="1"/>
</dbReference>
<dbReference type="FunFam" id="2.30.30.280:FF:000001">
    <property type="entry name" value="tRNA-specific 2-thiouridylase MnmA"/>
    <property type="match status" value="1"/>
</dbReference>
<dbReference type="FunFam" id="2.40.30.10:FF:000023">
    <property type="entry name" value="tRNA-specific 2-thiouridylase MnmA"/>
    <property type="match status" value="1"/>
</dbReference>
<dbReference type="FunFam" id="3.40.50.620:FF:000004">
    <property type="entry name" value="tRNA-specific 2-thiouridylase MnmA"/>
    <property type="match status" value="1"/>
</dbReference>
<dbReference type="Gene3D" id="2.30.30.280">
    <property type="entry name" value="Adenine nucleotide alpha hydrolases-like domains"/>
    <property type="match status" value="1"/>
</dbReference>
<dbReference type="Gene3D" id="3.40.50.620">
    <property type="entry name" value="HUPs"/>
    <property type="match status" value="1"/>
</dbReference>
<dbReference type="Gene3D" id="2.40.30.10">
    <property type="entry name" value="Translation factors"/>
    <property type="match status" value="1"/>
</dbReference>
<dbReference type="HAMAP" id="MF_00144">
    <property type="entry name" value="tRNA_thiouridyl_MnmA"/>
    <property type="match status" value="1"/>
</dbReference>
<dbReference type="InterPro" id="IPR004506">
    <property type="entry name" value="MnmA-like"/>
</dbReference>
<dbReference type="InterPro" id="IPR046885">
    <property type="entry name" value="MnmA-like_C"/>
</dbReference>
<dbReference type="InterPro" id="IPR046884">
    <property type="entry name" value="MnmA-like_central"/>
</dbReference>
<dbReference type="InterPro" id="IPR023382">
    <property type="entry name" value="MnmA-like_central_sf"/>
</dbReference>
<dbReference type="InterPro" id="IPR014729">
    <property type="entry name" value="Rossmann-like_a/b/a_fold"/>
</dbReference>
<dbReference type="NCBIfam" id="NF001138">
    <property type="entry name" value="PRK00143.1"/>
    <property type="match status" value="1"/>
</dbReference>
<dbReference type="NCBIfam" id="TIGR00420">
    <property type="entry name" value="trmU"/>
    <property type="match status" value="1"/>
</dbReference>
<dbReference type="PANTHER" id="PTHR11933:SF5">
    <property type="entry name" value="MITOCHONDRIAL TRNA-SPECIFIC 2-THIOURIDYLASE 1"/>
    <property type="match status" value="1"/>
</dbReference>
<dbReference type="PANTHER" id="PTHR11933">
    <property type="entry name" value="TRNA 5-METHYLAMINOMETHYL-2-THIOURIDYLATE -METHYLTRANSFERASE"/>
    <property type="match status" value="1"/>
</dbReference>
<dbReference type="Pfam" id="PF03054">
    <property type="entry name" value="tRNA_Me_trans"/>
    <property type="match status" value="1"/>
</dbReference>
<dbReference type="Pfam" id="PF20258">
    <property type="entry name" value="tRNA_Me_trans_C"/>
    <property type="match status" value="1"/>
</dbReference>
<dbReference type="Pfam" id="PF20259">
    <property type="entry name" value="tRNA_Me_trans_M"/>
    <property type="match status" value="1"/>
</dbReference>
<dbReference type="SUPFAM" id="SSF52402">
    <property type="entry name" value="Adenine nucleotide alpha hydrolases-like"/>
    <property type="match status" value="1"/>
</dbReference>
<comment type="function">
    <text evidence="1">Catalyzes the 2-thiolation of uridine at the wobble position (U34) of tRNA, leading to the formation of s(2)U34.</text>
</comment>
<comment type="catalytic activity">
    <reaction evidence="1">
        <text>S-sulfanyl-L-cysteinyl-[protein] + uridine(34) in tRNA + AH2 + ATP = 2-thiouridine(34) in tRNA + L-cysteinyl-[protein] + A + AMP + diphosphate + H(+)</text>
        <dbReference type="Rhea" id="RHEA:47032"/>
        <dbReference type="Rhea" id="RHEA-COMP:10131"/>
        <dbReference type="Rhea" id="RHEA-COMP:11726"/>
        <dbReference type="Rhea" id="RHEA-COMP:11727"/>
        <dbReference type="Rhea" id="RHEA-COMP:11728"/>
        <dbReference type="ChEBI" id="CHEBI:13193"/>
        <dbReference type="ChEBI" id="CHEBI:15378"/>
        <dbReference type="ChEBI" id="CHEBI:17499"/>
        <dbReference type="ChEBI" id="CHEBI:29950"/>
        <dbReference type="ChEBI" id="CHEBI:30616"/>
        <dbReference type="ChEBI" id="CHEBI:33019"/>
        <dbReference type="ChEBI" id="CHEBI:61963"/>
        <dbReference type="ChEBI" id="CHEBI:65315"/>
        <dbReference type="ChEBI" id="CHEBI:87170"/>
        <dbReference type="ChEBI" id="CHEBI:456215"/>
        <dbReference type="EC" id="2.8.1.13"/>
    </reaction>
</comment>
<comment type="subcellular location">
    <subcellularLocation>
        <location evidence="1">Cytoplasm</location>
    </subcellularLocation>
</comment>
<comment type="similarity">
    <text evidence="1">Belongs to the MnmA/TRMU family.</text>
</comment>
<evidence type="ECO:0000255" key="1">
    <source>
        <dbReference type="HAMAP-Rule" id="MF_00144"/>
    </source>
</evidence>
<evidence type="ECO:0000256" key="2">
    <source>
        <dbReference type="SAM" id="MobiDB-lite"/>
    </source>
</evidence>
<protein>
    <recommendedName>
        <fullName evidence="1">tRNA-specific 2-thiouridylase MnmA</fullName>
        <ecNumber evidence="1">2.8.1.13</ecNumber>
    </recommendedName>
</protein>
<gene>
    <name evidence="1" type="primary">mnmA</name>
    <name type="ordered locus">BceJ2315_32680</name>
    <name type="ORF">BCAL3329</name>
</gene>
<reference key="1">
    <citation type="journal article" date="2009" name="J. Bacteriol.">
        <title>The genome of Burkholderia cenocepacia J2315, an epidemic pathogen of cystic fibrosis patients.</title>
        <authorList>
            <person name="Holden M.T."/>
            <person name="Seth-Smith H.M."/>
            <person name="Crossman L.C."/>
            <person name="Sebaihia M."/>
            <person name="Bentley S.D."/>
            <person name="Cerdeno-Tarraga A.M."/>
            <person name="Thomson N.R."/>
            <person name="Bason N."/>
            <person name="Quail M.A."/>
            <person name="Sharp S."/>
            <person name="Cherevach I."/>
            <person name="Churcher C."/>
            <person name="Goodhead I."/>
            <person name="Hauser H."/>
            <person name="Holroyd N."/>
            <person name="Mungall K."/>
            <person name="Scott P."/>
            <person name="Walker D."/>
            <person name="White B."/>
            <person name="Rose H."/>
            <person name="Iversen P."/>
            <person name="Mil-Homens D."/>
            <person name="Rocha E.P."/>
            <person name="Fialho A.M."/>
            <person name="Baldwin A."/>
            <person name="Dowson C."/>
            <person name="Barrell B.G."/>
            <person name="Govan J.R."/>
            <person name="Vandamme P."/>
            <person name="Hart C.A."/>
            <person name="Mahenthiralingam E."/>
            <person name="Parkhill J."/>
        </authorList>
    </citation>
    <scope>NUCLEOTIDE SEQUENCE [LARGE SCALE GENOMIC DNA]</scope>
    <source>
        <strain>ATCC BAA-245 / DSM 16553 / LMG 16656 / NCTC 13227 / J2315 / CF5610</strain>
    </source>
</reference>
<name>MNMA_BURCJ</name>
<accession>B4EE50</accession>